<organism>
    <name type="scientific">Pectobacterium atrosepticum (strain SCRI 1043 / ATCC BAA-672)</name>
    <name type="common">Erwinia carotovora subsp. atroseptica</name>
    <dbReference type="NCBI Taxonomy" id="218491"/>
    <lineage>
        <taxon>Bacteria</taxon>
        <taxon>Pseudomonadati</taxon>
        <taxon>Pseudomonadota</taxon>
        <taxon>Gammaproteobacteria</taxon>
        <taxon>Enterobacterales</taxon>
        <taxon>Pectobacteriaceae</taxon>
        <taxon>Pectobacterium</taxon>
    </lineage>
</organism>
<gene>
    <name evidence="1" type="primary">nuoB</name>
    <name type="ordered locus">ECA3027</name>
</gene>
<name>NUOB_PECAS</name>
<evidence type="ECO:0000255" key="1">
    <source>
        <dbReference type="HAMAP-Rule" id="MF_01356"/>
    </source>
</evidence>
<dbReference type="EC" id="7.1.1.-" evidence="1"/>
<dbReference type="EMBL" id="BX950851">
    <property type="protein sequence ID" value="CAG75926.1"/>
    <property type="molecule type" value="Genomic_DNA"/>
</dbReference>
<dbReference type="RefSeq" id="WP_005969846.1">
    <property type="nucleotide sequence ID" value="NC_004547.2"/>
</dbReference>
<dbReference type="SMR" id="Q6D2R8"/>
<dbReference type="STRING" id="218491.ECA3027"/>
<dbReference type="KEGG" id="eca:ECA3027"/>
<dbReference type="eggNOG" id="COG0377">
    <property type="taxonomic scope" value="Bacteria"/>
</dbReference>
<dbReference type="HOGENOM" id="CLU_055737_7_3_6"/>
<dbReference type="OrthoDB" id="9786737at2"/>
<dbReference type="Proteomes" id="UP000007966">
    <property type="component" value="Chromosome"/>
</dbReference>
<dbReference type="GO" id="GO:0005886">
    <property type="term" value="C:plasma membrane"/>
    <property type="evidence" value="ECO:0007669"/>
    <property type="project" value="UniProtKB-SubCell"/>
</dbReference>
<dbReference type="GO" id="GO:0045271">
    <property type="term" value="C:respiratory chain complex I"/>
    <property type="evidence" value="ECO:0007669"/>
    <property type="project" value="TreeGrafter"/>
</dbReference>
<dbReference type="GO" id="GO:0051539">
    <property type="term" value="F:4 iron, 4 sulfur cluster binding"/>
    <property type="evidence" value="ECO:0007669"/>
    <property type="project" value="UniProtKB-KW"/>
</dbReference>
<dbReference type="GO" id="GO:0005506">
    <property type="term" value="F:iron ion binding"/>
    <property type="evidence" value="ECO:0007669"/>
    <property type="project" value="UniProtKB-UniRule"/>
</dbReference>
<dbReference type="GO" id="GO:0008137">
    <property type="term" value="F:NADH dehydrogenase (ubiquinone) activity"/>
    <property type="evidence" value="ECO:0007669"/>
    <property type="project" value="InterPro"/>
</dbReference>
<dbReference type="GO" id="GO:0050136">
    <property type="term" value="F:NADH:ubiquinone reductase (non-electrogenic) activity"/>
    <property type="evidence" value="ECO:0007669"/>
    <property type="project" value="UniProtKB-UniRule"/>
</dbReference>
<dbReference type="GO" id="GO:0048038">
    <property type="term" value="F:quinone binding"/>
    <property type="evidence" value="ECO:0007669"/>
    <property type="project" value="UniProtKB-KW"/>
</dbReference>
<dbReference type="GO" id="GO:0009060">
    <property type="term" value="P:aerobic respiration"/>
    <property type="evidence" value="ECO:0007669"/>
    <property type="project" value="TreeGrafter"/>
</dbReference>
<dbReference type="GO" id="GO:0015990">
    <property type="term" value="P:electron transport coupled proton transport"/>
    <property type="evidence" value="ECO:0007669"/>
    <property type="project" value="TreeGrafter"/>
</dbReference>
<dbReference type="FunFam" id="3.40.50.12280:FF:000002">
    <property type="entry name" value="NADH-quinone oxidoreductase subunit B"/>
    <property type="match status" value="1"/>
</dbReference>
<dbReference type="Gene3D" id="3.40.50.12280">
    <property type="match status" value="1"/>
</dbReference>
<dbReference type="HAMAP" id="MF_01356">
    <property type="entry name" value="NDH1_NuoB"/>
    <property type="match status" value="1"/>
</dbReference>
<dbReference type="InterPro" id="IPR006137">
    <property type="entry name" value="NADH_UbQ_OxRdtase-like_20kDa"/>
</dbReference>
<dbReference type="InterPro" id="IPR006138">
    <property type="entry name" value="NADH_UQ_OxRdtase_20Kd_su"/>
</dbReference>
<dbReference type="NCBIfam" id="TIGR01957">
    <property type="entry name" value="nuoB_fam"/>
    <property type="match status" value="1"/>
</dbReference>
<dbReference type="NCBIfam" id="NF005012">
    <property type="entry name" value="PRK06411.1"/>
    <property type="match status" value="1"/>
</dbReference>
<dbReference type="PANTHER" id="PTHR11995">
    <property type="entry name" value="NADH DEHYDROGENASE"/>
    <property type="match status" value="1"/>
</dbReference>
<dbReference type="PANTHER" id="PTHR11995:SF14">
    <property type="entry name" value="NADH DEHYDROGENASE [UBIQUINONE] IRON-SULFUR PROTEIN 7, MITOCHONDRIAL"/>
    <property type="match status" value="1"/>
</dbReference>
<dbReference type="Pfam" id="PF01058">
    <property type="entry name" value="Oxidored_q6"/>
    <property type="match status" value="1"/>
</dbReference>
<dbReference type="SUPFAM" id="SSF56770">
    <property type="entry name" value="HydA/Nqo6-like"/>
    <property type="match status" value="1"/>
</dbReference>
<dbReference type="PROSITE" id="PS01150">
    <property type="entry name" value="COMPLEX1_20K"/>
    <property type="match status" value="1"/>
</dbReference>
<accession>Q6D2R8</accession>
<proteinExistence type="inferred from homology"/>
<feature type="chain" id="PRO_0000376204" description="NADH-quinone oxidoreductase subunit B">
    <location>
        <begin position="1"/>
        <end position="224"/>
    </location>
</feature>
<feature type="binding site" evidence="1">
    <location>
        <position position="67"/>
    </location>
    <ligand>
        <name>[4Fe-4S] cluster</name>
        <dbReference type="ChEBI" id="CHEBI:49883"/>
    </ligand>
</feature>
<feature type="binding site" evidence="1">
    <location>
        <position position="68"/>
    </location>
    <ligand>
        <name>[4Fe-4S] cluster</name>
        <dbReference type="ChEBI" id="CHEBI:49883"/>
    </ligand>
</feature>
<feature type="binding site" evidence="1">
    <location>
        <position position="133"/>
    </location>
    <ligand>
        <name>[4Fe-4S] cluster</name>
        <dbReference type="ChEBI" id="CHEBI:49883"/>
    </ligand>
</feature>
<feature type="binding site" evidence="1">
    <location>
        <position position="162"/>
    </location>
    <ligand>
        <name>[4Fe-4S] cluster</name>
        <dbReference type="ChEBI" id="CHEBI:49883"/>
    </ligand>
</feature>
<sequence length="224" mass="25606">MDYTLTRIEPDGENDRYPLQRQEIVSDPLEQHVHRSVYMGKLEHALHDTVNWGRQNSLWPYNFGLSCCYVEMVTSFTAVHDVARFGAEVLRASPRQADFMVVAGTCFTKMAPVIQRLYEQMLEPKWVISMGACANSGGMYDIYSVVQGVDKFLPVDVYIPGCPPRPEAYMQALLLLKESIGKERRPLSWVVGEQGVYRANMQSERERKRGERIAVTNLRSPDEI</sequence>
<reference key="1">
    <citation type="journal article" date="2004" name="Proc. Natl. Acad. Sci. U.S.A.">
        <title>Genome sequence of the enterobacterial phytopathogen Erwinia carotovora subsp. atroseptica and characterization of virulence factors.</title>
        <authorList>
            <person name="Bell K.S."/>
            <person name="Sebaihia M."/>
            <person name="Pritchard L."/>
            <person name="Holden M.T.G."/>
            <person name="Hyman L.J."/>
            <person name="Holeva M.C."/>
            <person name="Thomson N.R."/>
            <person name="Bentley S.D."/>
            <person name="Churcher L.J.C."/>
            <person name="Mungall K."/>
            <person name="Atkin R."/>
            <person name="Bason N."/>
            <person name="Brooks K."/>
            <person name="Chillingworth T."/>
            <person name="Clark K."/>
            <person name="Doggett J."/>
            <person name="Fraser A."/>
            <person name="Hance Z."/>
            <person name="Hauser H."/>
            <person name="Jagels K."/>
            <person name="Moule S."/>
            <person name="Norbertczak H."/>
            <person name="Ormond D."/>
            <person name="Price C."/>
            <person name="Quail M.A."/>
            <person name="Sanders M."/>
            <person name="Walker D."/>
            <person name="Whitehead S."/>
            <person name="Salmond G.P.C."/>
            <person name="Birch P.R.J."/>
            <person name="Parkhill J."/>
            <person name="Toth I.K."/>
        </authorList>
    </citation>
    <scope>NUCLEOTIDE SEQUENCE [LARGE SCALE GENOMIC DNA]</scope>
    <source>
        <strain>SCRI 1043 / ATCC BAA-672</strain>
    </source>
</reference>
<keyword id="KW-0004">4Fe-4S</keyword>
<keyword id="KW-0997">Cell inner membrane</keyword>
<keyword id="KW-1003">Cell membrane</keyword>
<keyword id="KW-0408">Iron</keyword>
<keyword id="KW-0411">Iron-sulfur</keyword>
<keyword id="KW-0472">Membrane</keyword>
<keyword id="KW-0479">Metal-binding</keyword>
<keyword id="KW-0520">NAD</keyword>
<keyword id="KW-0874">Quinone</keyword>
<keyword id="KW-1185">Reference proteome</keyword>
<keyword id="KW-1278">Translocase</keyword>
<keyword id="KW-0813">Transport</keyword>
<keyword id="KW-0830">Ubiquinone</keyword>
<comment type="function">
    <text evidence="1">NDH-1 shuttles electrons from NADH, via FMN and iron-sulfur (Fe-S) centers, to quinones in the respiratory chain. The immediate electron acceptor for the enzyme in this species is believed to be ubiquinone. Couples the redox reaction to proton translocation (for every two electrons transferred, four hydrogen ions are translocated across the cytoplasmic membrane), and thus conserves the redox energy in a proton gradient.</text>
</comment>
<comment type="catalytic activity">
    <reaction evidence="1">
        <text>a quinone + NADH + 5 H(+)(in) = a quinol + NAD(+) + 4 H(+)(out)</text>
        <dbReference type="Rhea" id="RHEA:57888"/>
        <dbReference type="ChEBI" id="CHEBI:15378"/>
        <dbReference type="ChEBI" id="CHEBI:24646"/>
        <dbReference type="ChEBI" id="CHEBI:57540"/>
        <dbReference type="ChEBI" id="CHEBI:57945"/>
        <dbReference type="ChEBI" id="CHEBI:132124"/>
    </reaction>
</comment>
<comment type="cofactor">
    <cofactor evidence="1">
        <name>[4Fe-4S] cluster</name>
        <dbReference type="ChEBI" id="CHEBI:49883"/>
    </cofactor>
    <text evidence="1">Binds 1 [4Fe-4S] cluster.</text>
</comment>
<comment type="subunit">
    <text evidence="1">NDH-1 is composed of 13 different subunits. Subunits NuoB, CD, E, F, and G constitute the peripheral sector of the complex.</text>
</comment>
<comment type="subcellular location">
    <subcellularLocation>
        <location evidence="1">Cell inner membrane</location>
        <topology evidence="1">Peripheral membrane protein</topology>
        <orientation evidence="1">Cytoplasmic side</orientation>
    </subcellularLocation>
</comment>
<comment type="similarity">
    <text evidence="1">Belongs to the complex I 20 kDa subunit family.</text>
</comment>
<protein>
    <recommendedName>
        <fullName evidence="1">NADH-quinone oxidoreductase subunit B</fullName>
        <ecNumber evidence="1">7.1.1.-</ecNumber>
    </recommendedName>
    <alternativeName>
        <fullName evidence="1">NADH dehydrogenase I subunit B</fullName>
    </alternativeName>
    <alternativeName>
        <fullName evidence="1">NDH-1 subunit B</fullName>
    </alternativeName>
</protein>